<keyword id="KW-0001">2Fe-2S</keyword>
<keyword id="KW-0002">3D-structure</keyword>
<keyword id="KW-0249">Electron transport</keyword>
<keyword id="KW-0408">Iron</keyword>
<keyword id="KW-0411">Iron-sulfur</keyword>
<keyword id="KW-0472">Membrane</keyword>
<keyword id="KW-0479">Metal-binding</keyword>
<keyword id="KW-0496">Mitochondrion</keyword>
<keyword id="KW-0999">Mitochondrion inner membrane</keyword>
<keyword id="KW-0520">NAD</keyword>
<keyword id="KW-0560">Oxidoreductase</keyword>
<keyword id="KW-1185">Reference proteome</keyword>
<keyword id="KW-0679">Respiratory chain</keyword>
<keyword id="KW-0809">Transit peptide</keyword>
<keyword id="KW-1278">Translocase</keyword>
<keyword id="KW-0813">Transport</keyword>
<keyword id="KW-0830">Ubiquinone</keyword>
<protein>
    <recommendedName>
        <fullName>NADH dehydrogenase [ubiquinone] flavoprotein 2, mitochondrial</fullName>
        <ecNumber>7.1.1.2</ecNumber>
    </recommendedName>
</protein>
<feature type="transit peptide" description="Mitochondrion" evidence="2">
    <location>
        <begin position="1"/>
        <end position="35"/>
    </location>
</feature>
<feature type="chain" id="PRO_0000020007" description="NADH dehydrogenase [ubiquinone] flavoprotein 2, mitochondrial">
    <location>
        <begin position="36"/>
        <end position="255"/>
    </location>
</feature>
<feature type="region of interest" description="Disordered" evidence="3">
    <location>
        <begin position="214"/>
        <end position="255"/>
    </location>
</feature>
<feature type="binding site" evidence="2">
    <location>
        <position position="130"/>
    </location>
    <ligand>
        <name>[2Fe-2S] cluster</name>
        <dbReference type="ChEBI" id="CHEBI:190135"/>
    </ligand>
</feature>
<feature type="binding site" evidence="2">
    <location>
        <position position="135"/>
    </location>
    <ligand>
        <name>[2Fe-2S] cluster</name>
        <dbReference type="ChEBI" id="CHEBI:190135"/>
    </ligand>
</feature>
<feature type="binding site" evidence="2">
    <location>
        <position position="171"/>
    </location>
    <ligand>
        <name>[2Fe-2S] cluster</name>
        <dbReference type="ChEBI" id="CHEBI:190135"/>
    </ligand>
</feature>
<feature type="binding site" evidence="2">
    <location>
        <position position="175"/>
    </location>
    <ligand>
        <name>[2Fe-2S] cluster</name>
        <dbReference type="ChEBI" id="CHEBI:190135"/>
    </ligand>
</feature>
<feature type="strand" evidence="5">
    <location>
        <begin position="39"/>
        <end position="41"/>
    </location>
</feature>
<feature type="helix" evidence="7">
    <location>
        <begin position="51"/>
        <end position="61"/>
    </location>
</feature>
<feature type="helix" evidence="7">
    <location>
        <begin position="69"/>
        <end position="72"/>
    </location>
</feature>
<feature type="helix" evidence="7">
    <location>
        <begin position="73"/>
        <end position="83"/>
    </location>
</feature>
<feature type="helix" evidence="7">
    <location>
        <begin position="90"/>
        <end position="100"/>
    </location>
</feature>
<feature type="helix" evidence="7">
    <location>
        <begin position="104"/>
        <end position="113"/>
    </location>
</feature>
<feature type="strand" evidence="7">
    <location>
        <begin position="124"/>
        <end position="129"/>
    </location>
</feature>
<feature type="helix" evidence="7">
    <location>
        <begin position="133"/>
        <end position="136"/>
    </location>
</feature>
<feature type="strand" evidence="5">
    <location>
        <begin position="141"/>
        <end position="143"/>
    </location>
</feature>
<feature type="helix" evidence="7">
    <location>
        <begin position="144"/>
        <end position="151"/>
    </location>
</feature>
<feature type="strand" evidence="7">
    <location>
        <begin position="164"/>
        <end position="168"/>
    </location>
</feature>
<feature type="strand" evidence="6">
    <location>
        <begin position="176"/>
        <end position="178"/>
    </location>
</feature>
<feature type="strand" evidence="7">
    <location>
        <begin position="181"/>
        <end position="185"/>
    </location>
</feature>
<feature type="turn" evidence="7">
    <location>
        <begin position="187"/>
        <end position="192"/>
    </location>
</feature>
<feature type="strand" evidence="7">
    <location>
        <begin position="194"/>
        <end position="198"/>
    </location>
</feature>
<feature type="helix" evidence="7">
    <location>
        <begin position="203"/>
        <end position="215"/>
    </location>
</feature>
<name>NDUV2_ARATH</name>
<comment type="function">
    <text evidence="1">Core subunit of the mitochondrial membrane respiratory chain NADH dehydrogenase (Complex I) that is believed to belong to the minimal assembly required for catalysis. Complex I functions in the transfer of electrons from NADH to the respiratory chain. The immediate electron acceptor for the enzyme is believed to be ubiquinone (By similarity).</text>
</comment>
<comment type="catalytic activity">
    <reaction>
        <text>a ubiquinone + NADH + 5 H(+)(in) = a ubiquinol + NAD(+) + 4 H(+)(out)</text>
        <dbReference type="Rhea" id="RHEA:29091"/>
        <dbReference type="Rhea" id="RHEA-COMP:9565"/>
        <dbReference type="Rhea" id="RHEA-COMP:9566"/>
        <dbReference type="ChEBI" id="CHEBI:15378"/>
        <dbReference type="ChEBI" id="CHEBI:16389"/>
        <dbReference type="ChEBI" id="CHEBI:17976"/>
        <dbReference type="ChEBI" id="CHEBI:57540"/>
        <dbReference type="ChEBI" id="CHEBI:57945"/>
        <dbReference type="EC" id="7.1.1.2"/>
    </reaction>
</comment>
<comment type="cofactor">
    <cofactor evidence="4">
        <name>[2Fe-2S] cluster</name>
        <dbReference type="ChEBI" id="CHEBI:190135"/>
    </cofactor>
    <text evidence="4">Binds 1 [2Fe-2S] cluster.</text>
</comment>
<comment type="subunit">
    <text>Complex I is composed of at least 49 different subunits. This is a component of the flavoprotein-sulfur (FP) fragment of the enzyme.</text>
</comment>
<comment type="subcellular location">
    <subcellularLocation>
        <location evidence="1">Mitochondrion inner membrane</location>
    </subcellularLocation>
    <text evidence="1">Matrix and cytoplasmic side of the mitochondrial inner membrane.</text>
</comment>
<comment type="similarity">
    <text evidence="4">Belongs to the complex I 24 kDa subunit family.</text>
</comment>
<comment type="sequence caution" evidence="4">
    <conflict type="erroneous gene model prediction">
        <sequence resource="EMBL-CDS" id="AAC78260"/>
    </conflict>
</comment>
<comment type="sequence caution" evidence="4">
    <conflict type="erroneous gene model prediction">
        <sequence resource="EMBL-CDS" id="CAB80751"/>
    </conflict>
</comment>
<evidence type="ECO:0000250" key="1"/>
<evidence type="ECO:0000255" key="2"/>
<evidence type="ECO:0000256" key="3">
    <source>
        <dbReference type="SAM" id="MobiDB-lite"/>
    </source>
</evidence>
<evidence type="ECO:0000305" key="4"/>
<evidence type="ECO:0007829" key="5">
    <source>
        <dbReference type="PDB" id="7AQR"/>
    </source>
</evidence>
<evidence type="ECO:0007829" key="6">
    <source>
        <dbReference type="PDB" id="7ARB"/>
    </source>
</evidence>
<evidence type="ECO:0007829" key="7">
    <source>
        <dbReference type="PDB" id="8BED"/>
    </source>
</evidence>
<sequence length="255" mass="28389">MLARLAAKRLLEIRQVFRQPTSQVTRSLSTALNYHLDSPDNKPDLPWEFSEANQSKVKEILSYYPSNYKQSAVIPLLDLAQQQNGGWLPVSAMNAVAKVIEVAPIRVYEVATFYSMFNRAKVGKYHLLVCGTTPCMIRGSRDIESALLDHLGVKRGEVTKDGLFSVGEMECMGCCVNAPMITVADYSNGSEGYTYNYFEDVTPEKVVEIVEKLRKGEKPPHGTQNPKRIKCGPEGGNKTLLGEPKPPQFRDLDAC</sequence>
<dbReference type="EC" id="7.1.1.2"/>
<dbReference type="EMBL" id="AC002330">
    <property type="protein sequence ID" value="AAC78260.1"/>
    <property type="status" value="ALT_SEQ"/>
    <property type="molecule type" value="Genomic_DNA"/>
</dbReference>
<dbReference type="EMBL" id="AL161494">
    <property type="protein sequence ID" value="CAB80751.1"/>
    <property type="status" value="ALT_SEQ"/>
    <property type="molecule type" value="Genomic_DNA"/>
</dbReference>
<dbReference type="EMBL" id="CP002687">
    <property type="protein sequence ID" value="AEE82198.1"/>
    <property type="molecule type" value="Genomic_DNA"/>
</dbReference>
<dbReference type="EMBL" id="AY052326">
    <property type="protein sequence ID" value="AAK96519.1"/>
    <property type="molecule type" value="mRNA"/>
</dbReference>
<dbReference type="EMBL" id="BT001140">
    <property type="protein sequence ID" value="AAN64531.1"/>
    <property type="molecule type" value="mRNA"/>
</dbReference>
<dbReference type="PIR" id="T01091">
    <property type="entry name" value="T01091"/>
</dbReference>
<dbReference type="RefSeq" id="NP_567244.1">
    <property type="nucleotide sequence ID" value="NM_116492.4"/>
</dbReference>
<dbReference type="PDB" id="7A23">
    <property type="method" value="EM"/>
    <property type="resolution" value="3.70 A"/>
    <property type="chains" value="B=1-255"/>
</dbReference>
<dbReference type="PDB" id="7A24">
    <property type="method" value="EM"/>
    <property type="resolution" value="3.80 A"/>
    <property type="chains" value="B=1-255"/>
</dbReference>
<dbReference type="PDB" id="7AQR">
    <property type="method" value="EM"/>
    <property type="resolution" value="2.91 A"/>
    <property type="chains" value="E=1-255"/>
</dbReference>
<dbReference type="PDB" id="7AR7">
    <property type="method" value="EM"/>
    <property type="resolution" value="3.72 A"/>
    <property type="chains" value="E=30-221"/>
</dbReference>
<dbReference type="PDB" id="7AR8">
    <property type="method" value="EM"/>
    <property type="resolution" value="3.53 A"/>
    <property type="chains" value="E=1-255"/>
</dbReference>
<dbReference type="PDB" id="7ARB">
    <property type="method" value="EM"/>
    <property type="resolution" value="3.41 A"/>
    <property type="chains" value="E=1-255"/>
</dbReference>
<dbReference type="PDB" id="8BED">
    <property type="method" value="EM"/>
    <property type="resolution" value="2.03 A"/>
    <property type="chains" value="E=1-255"/>
</dbReference>
<dbReference type="PDB" id="8BPX">
    <property type="method" value="EM"/>
    <property type="resolution" value="2.09 A"/>
    <property type="chains" value="E=1-255"/>
</dbReference>
<dbReference type="PDB" id="8BQ5">
    <property type="method" value="EM"/>
    <property type="resolution" value="2.73 A"/>
    <property type="chains" value="E=1-255"/>
</dbReference>
<dbReference type="PDB" id="8BQ6">
    <property type="method" value="EM"/>
    <property type="resolution" value="2.80 A"/>
    <property type="chains" value="E=1-255"/>
</dbReference>
<dbReference type="PDBsum" id="7A23"/>
<dbReference type="PDBsum" id="7A24"/>
<dbReference type="PDBsum" id="7AQR"/>
<dbReference type="PDBsum" id="7AR7"/>
<dbReference type="PDBsum" id="7AR8"/>
<dbReference type="PDBsum" id="7ARB"/>
<dbReference type="PDBsum" id="8BED"/>
<dbReference type="PDBsum" id="8BPX"/>
<dbReference type="PDBsum" id="8BQ5"/>
<dbReference type="PDBsum" id="8BQ6"/>
<dbReference type="EMDB" id="EMD-11873"/>
<dbReference type="EMDB" id="EMD-11875"/>
<dbReference type="EMDB" id="EMD-11876"/>
<dbReference type="EMDB" id="EMD-11878"/>
<dbReference type="EMDB" id="EMD-15998"/>
<dbReference type="EMDB" id="EMD-16168"/>
<dbReference type="EMDB" id="EMD-16171"/>
<dbReference type="EMDB" id="EMD-16172"/>
<dbReference type="SMR" id="O22769"/>
<dbReference type="BioGRID" id="13419">
    <property type="interactions" value="1"/>
</dbReference>
<dbReference type="FunCoup" id="O22769">
    <property type="interactions" value="3399"/>
</dbReference>
<dbReference type="IntAct" id="O22769">
    <property type="interactions" value="2"/>
</dbReference>
<dbReference type="STRING" id="3702.O22769"/>
<dbReference type="TCDB" id="3.D.1.6.3">
    <property type="family name" value="the h+ or na+-translocating nadh dehydrogenase (ndh) family"/>
</dbReference>
<dbReference type="iPTMnet" id="O22769"/>
<dbReference type="PaxDb" id="3702-AT4G02580.1"/>
<dbReference type="ProteomicsDB" id="251287"/>
<dbReference type="EnsemblPlants" id="AT4G02580.1">
    <property type="protein sequence ID" value="AT4G02580.1"/>
    <property type="gene ID" value="AT4G02580"/>
</dbReference>
<dbReference type="GeneID" id="828130"/>
<dbReference type="Gramene" id="AT4G02580.1">
    <property type="protein sequence ID" value="AT4G02580.1"/>
    <property type="gene ID" value="AT4G02580"/>
</dbReference>
<dbReference type="KEGG" id="ath:AT4G02580"/>
<dbReference type="Araport" id="AT4G02580"/>
<dbReference type="TAIR" id="AT4G02580"/>
<dbReference type="eggNOG" id="KOG3196">
    <property type="taxonomic scope" value="Eukaryota"/>
</dbReference>
<dbReference type="HOGENOM" id="CLU_054362_1_1_1"/>
<dbReference type="InParanoid" id="O22769"/>
<dbReference type="OMA" id="IMSIYPE"/>
<dbReference type="PhylomeDB" id="O22769"/>
<dbReference type="BioCyc" id="ARA:AT4G02580-MONOMER"/>
<dbReference type="BioCyc" id="MetaCyc:AT4G02580-MONOMER"/>
<dbReference type="PRO" id="PR:O22769"/>
<dbReference type="Proteomes" id="UP000006548">
    <property type="component" value="Chromosome 4"/>
</dbReference>
<dbReference type="ExpressionAtlas" id="O22769">
    <property type="expression patterns" value="baseline and differential"/>
</dbReference>
<dbReference type="GO" id="GO:0005829">
    <property type="term" value="C:cytosol"/>
    <property type="evidence" value="ECO:0007005"/>
    <property type="project" value="TAIR"/>
</dbReference>
<dbReference type="GO" id="GO:0005743">
    <property type="term" value="C:mitochondrial inner membrane"/>
    <property type="evidence" value="ECO:0007669"/>
    <property type="project" value="UniProtKB-SubCell"/>
</dbReference>
<dbReference type="GO" id="GO:0005739">
    <property type="term" value="C:mitochondrion"/>
    <property type="evidence" value="ECO:0000314"/>
    <property type="project" value="TAIR"/>
</dbReference>
<dbReference type="GO" id="GO:0051537">
    <property type="term" value="F:2 iron, 2 sulfur cluster binding"/>
    <property type="evidence" value="ECO:0007669"/>
    <property type="project" value="UniProtKB-KW"/>
</dbReference>
<dbReference type="GO" id="GO:0008137">
    <property type="term" value="F:NADH dehydrogenase (ubiquinone) activity"/>
    <property type="evidence" value="ECO:0007669"/>
    <property type="project" value="UniProtKB-EC"/>
</dbReference>
<dbReference type="GO" id="GO:0008270">
    <property type="term" value="F:zinc ion binding"/>
    <property type="evidence" value="ECO:0007005"/>
    <property type="project" value="TAIR"/>
</dbReference>
<dbReference type="CDD" id="cd03064">
    <property type="entry name" value="TRX_Fd_NuoE"/>
    <property type="match status" value="1"/>
</dbReference>
<dbReference type="FunFam" id="3.40.30.10:FF:000097">
    <property type="entry name" value="NADH dehydrogenase [ubiquinone] flavoprotein 2"/>
    <property type="match status" value="1"/>
</dbReference>
<dbReference type="FunFam" id="1.10.10.1590:FF:000001">
    <property type="entry name" value="NADH-quinone oxidoreductase subunit E"/>
    <property type="match status" value="1"/>
</dbReference>
<dbReference type="Gene3D" id="3.40.30.10">
    <property type="entry name" value="Glutaredoxin"/>
    <property type="match status" value="1"/>
</dbReference>
<dbReference type="Gene3D" id="1.10.10.1590">
    <property type="entry name" value="NADH-quinone oxidoreductase subunit E"/>
    <property type="match status" value="1"/>
</dbReference>
<dbReference type="InterPro" id="IPR002023">
    <property type="entry name" value="NuoE-like"/>
</dbReference>
<dbReference type="InterPro" id="IPR042128">
    <property type="entry name" value="NuoE_dom"/>
</dbReference>
<dbReference type="InterPro" id="IPR041921">
    <property type="entry name" value="NuoE_N"/>
</dbReference>
<dbReference type="InterPro" id="IPR036249">
    <property type="entry name" value="Thioredoxin-like_sf"/>
</dbReference>
<dbReference type="NCBIfam" id="TIGR01958">
    <property type="entry name" value="nuoE_fam"/>
    <property type="match status" value="1"/>
</dbReference>
<dbReference type="PANTHER" id="PTHR10371:SF3">
    <property type="entry name" value="NADH DEHYDROGENASE [UBIQUINONE] FLAVOPROTEIN 2, MITOCHONDRIAL"/>
    <property type="match status" value="1"/>
</dbReference>
<dbReference type="PANTHER" id="PTHR10371">
    <property type="entry name" value="NADH DEHYDROGENASE UBIQUINONE FLAVOPROTEIN 2, MITOCHONDRIAL"/>
    <property type="match status" value="1"/>
</dbReference>
<dbReference type="Pfam" id="PF01257">
    <property type="entry name" value="2Fe-2S_thioredx"/>
    <property type="match status" value="1"/>
</dbReference>
<dbReference type="PIRSF" id="PIRSF000216">
    <property type="entry name" value="NADH_DH_24kDa"/>
    <property type="match status" value="1"/>
</dbReference>
<dbReference type="SUPFAM" id="SSF52833">
    <property type="entry name" value="Thioredoxin-like"/>
    <property type="match status" value="1"/>
</dbReference>
<dbReference type="PROSITE" id="PS01099">
    <property type="entry name" value="COMPLEX1_24K"/>
    <property type="match status" value="1"/>
</dbReference>
<organism>
    <name type="scientific">Arabidopsis thaliana</name>
    <name type="common">Mouse-ear cress</name>
    <dbReference type="NCBI Taxonomy" id="3702"/>
    <lineage>
        <taxon>Eukaryota</taxon>
        <taxon>Viridiplantae</taxon>
        <taxon>Streptophyta</taxon>
        <taxon>Embryophyta</taxon>
        <taxon>Tracheophyta</taxon>
        <taxon>Spermatophyta</taxon>
        <taxon>Magnoliopsida</taxon>
        <taxon>eudicotyledons</taxon>
        <taxon>Gunneridae</taxon>
        <taxon>Pentapetalae</taxon>
        <taxon>rosids</taxon>
        <taxon>malvids</taxon>
        <taxon>Brassicales</taxon>
        <taxon>Brassicaceae</taxon>
        <taxon>Camelineae</taxon>
        <taxon>Arabidopsis</taxon>
    </lineage>
</organism>
<accession>O22769</accession>
<accession>Q940Z9</accession>
<reference key="1">
    <citation type="journal article" date="1999" name="Nature">
        <title>Sequence and analysis of chromosome 4 of the plant Arabidopsis thaliana.</title>
        <authorList>
            <person name="Mayer K.F.X."/>
            <person name="Schueller C."/>
            <person name="Wambutt R."/>
            <person name="Murphy G."/>
            <person name="Volckaert G."/>
            <person name="Pohl T."/>
            <person name="Duesterhoeft A."/>
            <person name="Stiekema W."/>
            <person name="Entian K.-D."/>
            <person name="Terryn N."/>
            <person name="Harris B."/>
            <person name="Ansorge W."/>
            <person name="Brandt P."/>
            <person name="Grivell L.A."/>
            <person name="Rieger M."/>
            <person name="Weichselgartner M."/>
            <person name="de Simone V."/>
            <person name="Obermaier B."/>
            <person name="Mache R."/>
            <person name="Mueller M."/>
            <person name="Kreis M."/>
            <person name="Delseny M."/>
            <person name="Puigdomenech P."/>
            <person name="Watson M."/>
            <person name="Schmidtheini T."/>
            <person name="Reichert B."/>
            <person name="Portetelle D."/>
            <person name="Perez-Alonso M."/>
            <person name="Boutry M."/>
            <person name="Bancroft I."/>
            <person name="Vos P."/>
            <person name="Hoheisel J."/>
            <person name="Zimmermann W."/>
            <person name="Wedler H."/>
            <person name="Ridley P."/>
            <person name="Langham S.-A."/>
            <person name="McCullagh B."/>
            <person name="Bilham L."/>
            <person name="Robben J."/>
            <person name="van der Schueren J."/>
            <person name="Grymonprez B."/>
            <person name="Chuang Y.-J."/>
            <person name="Vandenbussche F."/>
            <person name="Braeken M."/>
            <person name="Weltjens I."/>
            <person name="Voet M."/>
            <person name="Bastiaens I."/>
            <person name="Aert R."/>
            <person name="Defoor E."/>
            <person name="Weitzenegger T."/>
            <person name="Bothe G."/>
            <person name="Ramsperger U."/>
            <person name="Hilbert H."/>
            <person name="Braun M."/>
            <person name="Holzer E."/>
            <person name="Brandt A."/>
            <person name="Peters S."/>
            <person name="van Staveren M."/>
            <person name="Dirkse W."/>
            <person name="Mooijman P."/>
            <person name="Klein Lankhorst R."/>
            <person name="Rose M."/>
            <person name="Hauf J."/>
            <person name="Koetter P."/>
            <person name="Berneiser S."/>
            <person name="Hempel S."/>
            <person name="Feldpausch M."/>
            <person name="Lamberth S."/>
            <person name="Van den Daele H."/>
            <person name="De Keyser A."/>
            <person name="Buysshaert C."/>
            <person name="Gielen J."/>
            <person name="Villarroel R."/>
            <person name="De Clercq R."/>
            <person name="van Montagu M."/>
            <person name="Rogers J."/>
            <person name="Cronin A."/>
            <person name="Quail M.A."/>
            <person name="Bray-Allen S."/>
            <person name="Clark L."/>
            <person name="Doggett J."/>
            <person name="Hall S."/>
            <person name="Kay M."/>
            <person name="Lennard N."/>
            <person name="McLay K."/>
            <person name="Mayes R."/>
            <person name="Pettett A."/>
            <person name="Rajandream M.A."/>
            <person name="Lyne M."/>
            <person name="Benes V."/>
            <person name="Rechmann S."/>
            <person name="Borkova D."/>
            <person name="Bloecker H."/>
            <person name="Scharfe M."/>
            <person name="Grimm M."/>
            <person name="Loehnert T.-H."/>
            <person name="Dose S."/>
            <person name="de Haan M."/>
            <person name="Maarse A.C."/>
            <person name="Schaefer M."/>
            <person name="Mueller-Auer S."/>
            <person name="Gabel C."/>
            <person name="Fuchs M."/>
            <person name="Fartmann B."/>
            <person name="Granderath K."/>
            <person name="Dauner D."/>
            <person name="Herzl A."/>
            <person name="Neumann S."/>
            <person name="Argiriou A."/>
            <person name="Vitale D."/>
            <person name="Liguori R."/>
            <person name="Piravandi E."/>
            <person name="Massenet O."/>
            <person name="Quigley F."/>
            <person name="Clabauld G."/>
            <person name="Muendlein A."/>
            <person name="Felber R."/>
            <person name="Schnabl S."/>
            <person name="Hiller R."/>
            <person name="Schmidt W."/>
            <person name="Lecharny A."/>
            <person name="Aubourg S."/>
            <person name="Chefdor F."/>
            <person name="Cooke R."/>
            <person name="Berger C."/>
            <person name="Monfort A."/>
            <person name="Casacuberta E."/>
            <person name="Gibbons T."/>
            <person name="Weber N."/>
            <person name="Vandenbol M."/>
            <person name="Bargues M."/>
            <person name="Terol J."/>
            <person name="Torres A."/>
            <person name="Perez-Perez A."/>
            <person name="Purnelle B."/>
            <person name="Bent E."/>
            <person name="Johnson S."/>
            <person name="Tacon D."/>
            <person name="Jesse T."/>
            <person name="Heijnen L."/>
            <person name="Schwarz S."/>
            <person name="Scholler P."/>
            <person name="Heber S."/>
            <person name="Francs P."/>
            <person name="Bielke C."/>
            <person name="Frishman D."/>
            <person name="Haase D."/>
            <person name="Lemcke K."/>
            <person name="Mewes H.-W."/>
            <person name="Stocker S."/>
            <person name="Zaccaria P."/>
            <person name="Bevan M."/>
            <person name="Wilson R.K."/>
            <person name="de la Bastide M."/>
            <person name="Habermann K."/>
            <person name="Parnell L."/>
            <person name="Dedhia N."/>
            <person name="Gnoj L."/>
            <person name="Schutz K."/>
            <person name="Huang E."/>
            <person name="Spiegel L."/>
            <person name="Sekhon M."/>
            <person name="Murray J."/>
            <person name="Sheet P."/>
            <person name="Cordes M."/>
            <person name="Abu-Threideh J."/>
            <person name="Stoneking T."/>
            <person name="Kalicki J."/>
            <person name="Graves T."/>
            <person name="Harmon G."/>
            <person name="Edwards J."/>
            <person name="Latreille P."/>
            <person name="Courtney L."/>
            <person name="Cloud J."/>
            <person name="Abbott A."/>
            <person name="Scott K."/>
            <person name="Johnson D."/>
            <person name="Minx P."/>
            <person name="Bentley D."/>
            <person name="Fulton B."/>
            <person name="Miller N."/>
            <person name="Greco T."/>
            <person name="Kemp K."/>
            <person name="Kramer J."/>
            <person name="Fulton L."/>
            <person name="Mardis E."/>
            <person name="Dante M."/>
            <person name="Pepin K."/>
            <person name="Hillier L.W."/>
            <person name="Nelson J."/>
            <person name="Spieth J."/>
            <person name="Ryan E."/>
            <person name="Andrews S."/>
            <person name="Geisel C."/>
            <person name="Layman D."/>
            <person name="Du H."/>
            <person name="Ali J."/>
            <person name="Berghoff A."/>
            <person name="Jones K."/>
            <person name="Drone K."/>
            <person name="Cotton M."/>
            <person name="Joshu C."/>
            <person name="Antonoiu B."/>
            <person name="Zidanic M."/>
            <person name="Strong C."/>
            <person name="Sun H."/>
            <person name="Lamar B."/>
            <person name="Yordan C."/>
            <person name="Ma P."/>
            <person name="Zhong J."/>
            <person name="Preston R."/>
            <person name="Vil D."/>
            <person name="Shekher M."/>
            <person name="Matero A."/>
            <person name="Shah R."/>
            <person name="Swaby I.K."/>
            <person name="O'Shaughnessy A."/>
            <person name="Rodriguez M."/>
            <person name="Hoffman J."/>
            <person name="Till S."/>
            <person name="Granat S."/>
            <person name="Shohdy N."/>
            <person name="Hasegawa A."/>
            <person name="Hameed A."/>
            <person name="Lodhi M."/>
            <person name="Johnson A."/>
            <person name="Chen E."/>
            <person name="Marra M.A."/>
            <person name="Martienssen R."/>
            <person name="McCombie W.R."/>
        </authorList>
    </citation>
    <scope>NUCLEOTIDE SEQUENCE [LARGE SCALE GENOMIC DNA]</scope>
    <source>
        <strain>cv. Columbia</strain>
    </source>
</reference>
<reference key="2">
    <citation type="journal article" date="2017" name="Plant J.">
        <title>Araport11: a complete reannotation of the Arabidopsis thaliana reference genome.</title>
        <authorList>
            <person name="Cheng C.Y."/>
            <person name="Krishnakumar V."/>
            <person name="Chan A.P."/>
            <person name="Thibaud-Nissen F."/>
            <person name="Schobel S."/>
            <person name="Town C.D."/>
        </authorList>
    </citation>
    <scope>GENOME REANNOTATION</scope>
    <source>
        <strain>cv. Columbia</strain>
    </source>
</reference>
<reference key="3">
    <citation type="journal article" date="2003" name="Science">
        <title>Empirical analysis of transcriptional activity in the Arabidopsis genome.</title>
        <authorList>
            <person name="Yamada K."/>
            <person name="Lim J."/>
            <person name="Dale J.M."/>
            <person name="Chen H."/>
            <person name="Shinn P."/>
            <person name="Palm C.J."/>
            <person name="Southwick A.M."/>
            <person name="Wu H.C."/>
            <person name="Kim C.J."/>
            <person name="Nguyen M."/>
            <person name="Pham P.K."/>
            <person name="Cheuk R.F."/>
            <person name="Karlin-Newmann G."/>
            <person name="Liu S.X."/>
            <person name="Lam B."/>
            <person name="Sakano H."/>
            <person name="Wu T."/>
            <person name="Yu G."/>
            <person name="Miranda M."/>
            <person name="Quach H.L."/>
            <person name="Tripp M."/>
            <person name="Chang C.H."/>
            <person name="Lee J.M."/>
            <person name="Toriumi M.J."/>
            <person name="Chan M.M."/>
            <person name="Tang C.C."/>
            <person name="Onodera C.S."/>
            <person name="Deng J.M."/>
            <person name="Akiyama K."/>
            <person name="Ansari Y."/>
            <person name="Arakawa T."/>
            <person name="Banh J."/>
            <person name="Banno F."/>
            <person name="Bowser L."/>
            <person name="Brooks S.Y."/>
            <person name="Carninci P."/>
            <person name="Chao Q."/>
            <person name="Choy N."/>
            <person name="Enju A."/>
            <person name="Goldsmith A.D."/>
            <person name="Gurjal M."/>
            <person name="Hansen N.F."/>
            <person name="Hayashizaki Y."/>
            <person name="Johnson-Hopson C."/>
            <person name="Hsuan V.W."/>
            <person name="Iida K."/>
            <person name="Karnes M."/>
            <person name="Khan S."/>
            <person name="Koesema E."/>
            <person name="Ishida J."/>
            <person name="Jiang P.X."/>
            <person name="Jones T."/>
            <person name="Kawai J."/>
            <person name="Kamiya A."/>
            <person name="Meyers C."/>
            <person name="Nakajima M."/>
            <person name="Narusaka M."/>
            <person name="Seki M."/>
            <person name="Sakurai T."/>
            <person name="Satou M."/>
            <person name="Tamse R."/>
            <person name="Vaysberg M."/>
            <person name="Wallender E.K."/>
            <person name="Wong C."/>
            <person name="Yamamura Y."/>
            <person name="Yuan S."/>
            <person name="Shinozaki K."/>
            <person name="Davis R.W."/>
            <person name="Theologis A."/>
            <person name="Ecker J.R."/>
        </authorList>
    </citation>
    <scope>NUCLEOTIDE SEQUENCE [LARGE SCALE MRNA]</scope>
    <source>
        <strain>cv. Columbia</strain>
    </source>
</reference>
<reference key="4">
    <citation type="journal article" date="2004" name="Plant Cell">
        <title>Experimental analysis of the Arabidopsis mitochondrial proteome highlights signaling and regulatory components, provides assessment of targeting prediction programs, and indicates plant-specific mitochondrial proteins.</title>
        <authorList>
            <person name="Heazlewood J.L."/>
            <person name="Tonti-Filippini J.S."/>
            <person name="Gout A.M."/>
            <person name="Day D.A."/>
            <person name="Whelan J."/>
            <person name="Millar A.H."/>
        </authorList>
    </citation>
    <scope>IDENTIFICATION BY MASS SPECTROMETRY</scope>
    <scope>SUBCELLULAR LOCATION [LARGE SCALE ANALYSIS]</scope>
    <source>
        <strain>cv. Landsberg erecta</strain>
    </source>
</reference>
<proteinExistence type="evidence at protein level"/>
<gene>
    <name type="ordered locus">At4g02580</name>
    <name type="ORF">T10P11.14</name>
</gene>